<keyword id="KW-0997">Cell inner membrane</keyword>
<keyword id="KW-1003">Cell membrane</keyword>
<keyword id="KW-0472">Membrane</keyword>
<keyword id="KW-1185">Reference proteome</keyword>
<keyword id="KW-0812">Transmembrane</keyword>
<keyword id="KW-1133">Transmembrane helix</keyword>
<dbReference type="EMBL" id="AL123456">
    <property type="protein sequence ID" value="CCP46693.1"/>
    <property type="molecule type" value="Genomic_DNA"/>
</dbReference>
<dbReference type="PIR" id="E70656">
    <property type="entry name" value="E70656"/>
</dbReference>
<dbReference type="RefSeq" id="NP_218381.1">
    <property type="nucleotide sequence ID" value="NC_000962.3"/>
</dbReference>
<dbReference type="RefSeq" id="WP_003899736.1">
    <property type="nucleotide sequence ID" value="NZ_KK339374.1"/>
</dbReference>
<dbReference type="STRING" id="83332.Rv3864"/>
<dbReference type="PaxDb" id="83332-Rv3864"/>
<dbReference type="DNASU" id="886185"/>
<dbReference type="GeneID" id="886185"/>
<dbReference type="KEGG" id="mtu:Rv3864"/>
<dbReference type="KEGG" id="mtv:RVBD_3864"/>
<dbReference type="TubercuList" id="Rv3864"/>
<dbReference type="eggNOG" id="COG3266">
    <property type="taxonomic scope" value="Bacteria"/>
</dbReference>
<dbReference type="InParanoid" id="P9WJD3"/>
<dbReference type="OrthoDB" id="4699101at2"/>
<dbReference type="Proteomes" id="UP000001584">
    <property type="component" value="Chromosome"/>
</dbReference>
<dbReference type="GO" id="GO:0005886">
    <property type="term" value="C:plasma membrane"/>
    <property type="evidence" value="ECO:0007669"/>
    <property type="project" value="UniProtKB-SubCell"/>
</dbReference>
<dbReference type="GO" id="GO:0051701">
    <property type="term" value="P:biological process involved in interaction with host"/>
    <property type="evidence" value="ECO:0000315"/>
    <property type="project" value="MTBBASE"/>
</dbReference>
<dbReference type="InterPro" id="IPR043796">
    <property type="entry name" value="ESX-1_EspA/EspE-like"/>
</dbReference>
<dbReference type="Pfam" id="PF18879">
    <property type="entry name" value="EspA_EspE"/>
    <property type="match status" value="1"/>
</dbReference>
<sequence>MASGSGLCKTTSNFIWGQLLLLGEGIPDPGDIFNTGSSLFKQISDKMGLAIPGTNWIGQAAEAYLNQNIAQQLRAQVMGDLDKLTGNMISNQAKYVSDTRDVLRAMKKMIDGVYKVCKGLEKIPLLGHLWSWELAIPMSGIAMAVVGGALLYLTIMTLMNATNLRGILGRLIEMLTTLPKFPGLPGLPSLPDIIDGLWPPKLPDIPIPGLPDIPGLPDFKWPPTPGSPLFPDLPSFPGFPGFPEFPAIPGFPALPGLPSIPNLFPGLPGLGDLLPGVGDLGKLPTWTELAALPDFLGGFAGLPSLGFGNLLSFASLPTVGQVTATMGQLQQLVAAGGGPSQLASMGSQQAQLISSQAQQGGQQHATLVSDKKEDEEGVAEAERAPIDAGTAASQRGQEGTVL</sequence>
<evidence type="ECO:0000255" key="1"/>
<evidence type="ECO:0000256" key="2">
    <source>
        <dbReference type="SAM" id="MobiDB-lite"/>
    </source>
</evidence>
<evidence type="ECO:0000269" key="3">
    <source>
    </source>
</evidence>
<evidence type="ECO:0000269" key="4">
    <source>
    </source>
</evidence>
<evidence type="ECO:0000269" key="5">
    <source>
    </source>
</evidence>
<evidence type="ECO:0000305" key="6"/>
<proteinExistence type="evidence at protein level"/>
<gene>
    <name type="primary">espE</name>
    <name type="ordered locus">Rv3864</name>
</gene>
<protein>
    <recommendedName>
        <fullName evidence="6">ESX-1 secretion-associated protein EspE</fullName>
    </recommendedName>
</protein>
<comment type="subcellular location">
    <subcellularLocation>
        <location evidence="6">Cell inner membrane</location>
        <topology evidence="1">Single-pass membrane protein</topology>
    </subcellularLocation>
    <text evidence="5">Localizes at or near the cell pole in (on average) 1 discrete spot upon overexpression in M.smegmatis (PubMed:22233444).</text>
</comment>
<comment type="disruption phenotype">
    <text evidence="3 4">Inactivation does not abolish EsxA (ESAT-6) secretion, EsxA-specific immunogenicity and enhanced virulence.</text>
</comment>
<reference key="1">
    <citation type="journal article" date="1998" name="Nature">
        <title>Deciphering the biology of Mycobacterium tuberculosis from the complete genome sequence.</title>
        <authorList>
            <person name="Cole S.T."/>
            <person name="Brosch R."/>
            <person name="Parkhill J."/>
            <person name="Garnier T."/>
            <person name="Churcher C.M."/>
            <person name="Harris D.E."/>
            <person name="Gordon S.V."/>
            <person name="Eiglmeier K."/>
            <person name="Gas S."/>
            <person name="Barry C.E. III"/>
            <person name="Tekaia F."/>
            <person name="Badcock K."/>
            <person name="Basham D."/>
            <person name="Brown D."/>
            <person name="Chillingworth T."/>
            <person name="Connor R."/>
            <person name="Davies R.M."/>
            <person name="Devlin K."/>
            <person name="Feltwell T."/>
            <person name="Gentles S."/>
            <person name="Hamlin N."/>
            <person name="Holroyd S."/>
            <person name="Hornsby T."/>
            <person name="Jagels K."/>
            <person name="Krogh A."/>
            <person name="McLean J."/>
            <person name="Moule S."/>
            <person name="Murphy L.D."/>
            <person name="Oliver S."/>
            <person name="Osborne J."/>
            <person name="Quail M.A."/>
            <person name="Rajandream M.A."/>
            <person name="Rogers J."/>
            <person name="Rutter S."/>
            <person name="Seeger K."/>
            <person name="Skelton S."/>
            <person name="Squares S."/>
            <person name="Squares R."/>
            <person name="Sulston J.E."/>
            <person name="Taylor K."/>
            <person name="Whitehead S."/>
            <person name="Barrell B.G."/>
        </authorList>
    </citation>
    <scope>NUCLEOTIDE SEQUENCE [LARGE SCALE GENOMIC DNA]</scope>
    <source>
        <strain>ATCC 25618 / H37Rv</strain>
    </source>
</reference>
<reference key="2">
    <citation type="journal article" date="2004" name="Mol. Microbiol.">
        <title>Individual RD1-region genes are required for export of ESAT-6/CFP-10 and for virulence of Mycobacterium tuberculosis.</title>
        <authorList>
            <person name="Guinn K.M."/>
            <person name="Hickey M.J."/>
            <person name="Mathur S.K."/>
            <person name="Zakel K.L."/>
            <person name="Grotzke J.E."/>
            <person name="Lewinsohn D.M."/>
            <person name="Smith S."/>
            <person name="Sherman D.R."/>
        </authorList>
    </citation>
    <scope>DISRUPTION PHENOTYPE</scope>
    <source>
        <strain>ATCC 25618 / H37Rv</strain>
    </source>
</reference>
<reference key="3">
    <citation type="journal article" date="2006" name="Infect. Immun.">
        <title>Dissection of ESAT-6 system 1 of Mycobacterium tuberculosis and impact on immunogenicity and virulence.</title>
        <authorList>
            <person name="Brodin P."/>
            <person name="Majlessi L."/>
            <person name="Marsollier L."/>
            <person name="de Jonge M.I."/>
            <person name="Bottai D."/>
            <person name="Demangel C."/>
            <person name="Hinds J."/>
            <person name="Neyrolles O."/>
            <person name="Butcher P.D."/>
            <person name="Leclerc C."/>
            <person name="Cole S.T."/>
            <person name="Brosch R."/>
        </authorList>
    </citation>
    <scope>DISRUPTION PHENOTYPE</scope>
</reference>
<reference key="4">
    <citation type="journal article" date="2011" name="Mol. Cell. Proteomics">
        <title>Proteogenomic analysis of Mycobacterium tuberculosis by high resolution mass spectrometry.</title>
        <authorList>
            <person name="Kelkar D.S."/>
            <person name="Kumar D."/>
            <person name="Kumar P."/>
            <person name="Balakrishnan L."/>
            <person name="Muthusamy B."/>
            <person name="Yadav A.K."/>
            <person name="Shrivastava P."/>
            <person name="Marimuthu A."/>
            <person name="Anand S."/>
            <person name="Sundaram H."/>
            <person name="Kingsbury R."/>
            <person name="Harsha H.C."/>
            <person name="Nair B."/>
            <person name="Prasad T.S."/>
            <person name="Chauhan D.S."/>
            <person name="Katoch K."/>
            <person name="Katoch V.M."/>
            <person name="Kumar P."/>
            <person name="Chaerkady R."/>
            <person name="Ramachandran S."/>
            <person name="Dash D."/>
            <person name="Pandey A."/>
        </authorList>
    </citation>
    <scope>IDENTIFICATION BY MASS SPECTROMETRY [LARGE SCALE ANALYSIS]</scope>
    <source>
        <strain>ATCC 25618 / H37Rv</strain>
    </source>
</reference>
<reference key="5">
    <citation type="journal article" date="2012" name="Mol. Microbiol.">
        <title>Polar assembly and scaffolding proteins of the virulence-associated ESX-1 secretory apparatus in mycobacteria.</title>
        <authorList>
            <person name="Wirth S.E."/>
            <person name="Krywy J.A."/>
            <person name="Aldridge B.B."/>
            <person name="Fortune S.M."/>
            <person name="Fernandez-Suarez M."/>
            <person name="Gray T.A."/>
            <person name="Derbyshire K.M."/>
        </authorList>
    </citation>
    <scope>SUBCELLULAR LOCATION</scope>
    <source>
        <strain>H37Rv</strain>
    </source>
</reference>
<name>ESPE_MYCTU</name>
<accession>P9WJD3</accession>
<accession>L0TDS9</accession>
<accession>P96213</accession>
<accession>Q7D4P9</accession>
<feature type="chain" id="PRO_0000393950" description="ESX-1 secretion-associated protein EspE">
    <location>
        <begin position="1"/>
        <end position="402"/>
    </location>
</feature>
<feature type="transmembrane region" description="Helical" evidence="1">
    <location>
        <begin position="136"/>
        <end position="156"/>
    </location>
</feature>
<feature type="region of interest" description="Disordered" evidence="2">
    <location>
        <begin position="345"/>
        <end position="402"/>
    </location>
</feature>
<feature type="compositionally biased region" description="Low complexity" evidence="2">
    <location>
        <begin position="346"/>
        <end position="365"/>
    </location>
</feature>
<feature type="compositionally biased region" description="Basic and acidic residues" evidence="2">
    <location>
        <begin position="369"/>
        <end position="385"/>
    </location>
</feature>
<feature type="compositionally biased region" description="Polar residues" evidence="2">
    <location>
        <begin position="391"/>
        <end position="402"/>
    </location>
</feature>
<organism>
    <name type="scientific">Mycobacterium tuberculosis (strain ATCC 25618 / H37Rv)</name>
    <dbReference type="NCBI Taxonomy" id="83332"/>
    <lineage>
        <taxon>Bacteria</taxon>
        <taxon>Bacillati</taxon>
        <taxon>Actinomycetota</taxon>
        <taxon>Actinomycetes</taxon>
        <taxon>Mycobacteriales</taxon>
        <taxon>Mycobacteriaceae</taxon>
        <taxon>Mycobacterium</taxon>
        <taxon>Mycobacterium tuberculosis complex</taxon>
    </lineage>
</organism>